<feature type="signal peptide" evidence="5">
    <location>
        <begin position="1"/>
        <end position="23"/>
    </location>
</feature>
<feature type="propeptide" id="PRO_0000026463" description="Activation peptide" evidence="1">
    <location>
        <begin position="24"/>
        <end position="136"/>
    </location>
</feature>
<feature type="chain" id="PRO_0000026464" description="Probable cysteine protease RDL4">
    <location>
        <begin position="137"/>
        <end position="364"/>
    </location>
</feature>
<feature type="active site" evidence="7">
    <location>
        <position position="161"/>
    </location>
</feature>
<feature type="active site" evidence="8">
    <location>
        <position position="297"/>
    </location>
</feature>
<feature type="active site" evidence="9">
    <location>
        <position position="317"/>
    </location>
</feature>
<feature type="glycosylation site" description="N-linked (GlcNAc...) asparagine" evidence="6">
    <location>
        <position position="87"/>
    </location>
</feature>
<feature type="disulfide bond" evidence="4">
    <location>
        <begin position="158"/>
        <end position="199"/>
    </location>
</feature>
<feature type="disulfide bond" evidence="4">
    <location>
        <begin position="192"/>
        <end position="232"/>
    </location>
</feature>
<feature type="disulfide bond" evidence="4">
    <location>
        <begin position="291"/>
        <end position="342"/>
    </location>
</feature>
<feature type="sequence conflict" description="In Ref. 4; CAA85532." evidence="12" ref="4">
    <original>A</original>
    <variation>G</variation>
    <location>
        <position position="98"/>
    </location>
</feature>
<keyword id="KW-1015">Disulfide bond</keyword>
<keyword id="KW-0325">Glycoprotein</keyword>
<keyword id="KW-0378">Hydrolase</keyword>
<keyword id="KW-0645">Protease</keyword>
<keyword id="KW-1185">Reference proteome</keyword>
<keyword id="KW-0732">Signal</keyword>
<keyword id="KW-0788">Thiol protease</keyword>
<keyword id="KW-0865">Zymogen</keyword>
<evidence type="ECO:0000250" key="1">
    <source>
        <dbReference type="UniProtKB" id="P00785"/>
    </source>
</evidence>
<evidence type="ECO:0000250" key="2">
    <source>
        <dbReference type="UniProtKB" id="P43297"/>
    </source>
</evidence>
<evidence type="ECO:0000250" key="3">
    <source>
        <dbReference type="UniProtKB" id="P80884"/>
    </source>
</evidence>
<evidence type="ECO:0000250" key="4">
    <source>
        <dbReference type="UniProtKB" id="P84346"/>
    </source>
</evidence>
<evidence type="ECO:0000255" key="5"/>
<evidence type="ECO:0000255" key="6">
    <source>
        <dbReference type="PROSITE-ProRule" id="PRU00498"/>
    </source>
</evidence>
<evidence type="ECO:0000255" key="7">
    <source>
        <dbReference type="PROSITE-ProRule" id="PRU10088"/>
    </source>
</evidence>
<evidence type="ECO:0000255" key="8">
    <source>
        <dbReference type="PROSITE-ProRule" id="PRU10089"/>
    </source>
</evidence>
<evidence type="ECO:0000255" key="9">
    <source>
        <dbReference type="PROSITE-ProRule" id="PRU10090"/>
    </source>
</evidence>
<evidence type="ECO:0000269" key="10">
    <source>
    </source>
</evidence>
<evidence type="ECO:0000303" key="11">
    <source>
    </source>
</evidence>
<evidence type="ECO:0000305" key="12"/>
<evidence type="ECO:0000312" key="13">
    <source>
        <dbReference type="Araport" id="AT4G11310"/>
    </source>
</evidence>
<evidence type="ECO:0000312" key="14">
    <source>
        <dbReference type="EMBL" id="CAB51415.1"/>
    </source>
</evidence>
<name>RDL4_ARATH</name>
<accession>Q9SUT0</accession>
<accession>Q42312</accession>
<accession>Q8RWI3</accession>
<gene>
    <name evidence="12" type="primary">RDL4</name>
    <name evidence="11" type="synonym">CP1</name>
    <name evidence="13" type="ordered locus">At4g11310</name>
    <name evidence="14" type="ORF">F8L21.100</name>
</gene>
<sequence length="364" mass="39925">MGSAKSAMLILLVAMVIASCATAIDMSVVSYDDNNRLHSVFDAEASLIFESWMVKHGKVYGSVAEKERRLTIFEDNLRFINNRNAENLSYRLGLTGFADLSLHEYKEVCHGADPRPPRNHVFMTSSDRYKTSADDVLPKSVDWRNEGAVTEVKDQGHCRSCWAFSTVGAVEGLNKIVTGELVTLSEQDLINCNKENNGCGGGKLETAYEFIMKNGGLGTDNDYPYKAVNGVCDGRLKENNKNVMIDGYENLPANDESALMKAVAHQPVTAVIDSSSREFQLYESGVFDGSCGTNLNHGVVVVGYGTENGRDYWLVKNSRGITWGEAGYMKMARNIANPRGLCGIAMRASYPLKNSFSTDKSSIA</sequence>
<protein>
    <recommendedName>
        <fullName evidence="12">Probable cysteine protease RDL4</fullName>
        <ecNumber evidence="3">3.4.22.-</ecNumber>
    </recommendedName>
    <alternativeName>
        <fullName evidence="11">Cysteine protease 1</fullName>
        <shortName evidence="11">AtCP1</shortName>
    </alternativeName>
    <alternativeName>
        <fullName evidence="12">Probable cysteine proteinase At4g11310</fullName>
    </alternativeName>
    <alternativeName>
        <fullName evidence="12">RD21A-like protease 4</fullName>
    </alternativeName>
</protein>
<dbReference type="EC" id="3.4.22.-" evidence="3"/>
<dbReference type="EMBL" id="AL096882">
    <property type="protein sequence ID" value="CAB51415.1"/>
    <property type="molecule type" value="Genomic_DNA"/>
</dbReference>
<dbReference type="EMBL" id="AL161531">
    <property type="protein sequence ID" value="CAB81232.1"/>
    <property type="molecule type" value="Genomic_DNA"/>
</dbReference>
<dbReference type="EMBL" id="CP002687">
    <property type="protein sequence ID" value="AEE82995.1"/>
    <property type="molecule type" value="Genomic_DNA"/>
</dbReference>
<dbReference type="EMBL" id="AY093066">
    <property type="protein sequence ID" value="AAM13065.1"/>
    <property type="status" value="ALT_INIT"/>
    <property type="molecule type" value="mRNA"/>
</dbReference>
<dbReference type="EMBL" id="BT000099">
    <property type="protein sequence ID" value="AAN15418.1"/>
    <property type="status" value="ALT_INIT"/>
    <property type="molecule type" value="mRNA"/>
</dbReference>
<dbReference type="EMBL" id="Z37253">
    <property type="protein sequence ID" value="CAA85532.1"/>
    <property type="molecule type" value="mRNA"/>
</dbReference>
<dbReference type="PIR" id="T13022">
    <property type="entry name" value="T13022"/>
</dbReference>
<dbReference type="RefSeq" id="NP_567376.1">
    <property type="nucleotide sequence ID" value="NM_117202.3"/>
</dbReference>
<dbReference type="SMR" id="Q9SUT0"/>
<dbReference type="BioGRID" id="12032">
    <property type="interactions" value="4"/>
</dbReference>
<dbReference type="FunCoup" id="Q9SUT0">
    <property type="interactions" value="208"/>
</dbReference>
<dbReference type="IntAct" id="Q9SUT0">
    <property type="interactions" value="3"/>
</dbReference>
<dbReference type="STRING" id="3702.Q9SUT0"/>
<dbReference type="MEROPS" id="C01.A20"/>
<dbReference type="GlyCosmos" id="Q9SUT0">
    <property type="glycosylation" value="1 site, No reported glycans"/>
</dbReference>
<dbReference type="GlyGen" id="Q9SUT0">
    <property type="glycosylation" value="1 site"/>
</dbReference>
<dbReference type="iPTMnet" id="Q9SUT0"/>
<dbReference type="PaxDb" id="3702-AT4G11310.1"/>
<dbReference type="ProteomicsDB" id="234718"/>
<dbReference type="EnsemblPlants" id="AT4G11310.1">
    <property type="protein sequence ID" value="AT4G11310.1"/>
    <property type="gene ID" value="AT4G11310"/>
</dbReference>
<dbReference type="GeneID" id="826733"/>
<dbReference type="Gramene" id="AT4G11310.1">
    <property type="protein sequence ID" value="AT4G11310.1"/>
    <property type="gene ID" value="AT4G11310"/>
</dbReference>
<dbReference type="KEGG" id="ath:AT4G11310"/>
<dbReference type="Araport" id="AT4G11310"/>
<dbReference type="TAIR" id="AT4G11310">
    <property type="gene designation" value="CP1"/>
</dbReference>
<dbReference type="eggNOG" id="KOG1543">
    <property type="taxonomic scope" value="Eukaryota"/>
</dbReference>
<dbReference type="HOGENOM" id="CLU_012184_1_0_1"/>
<dbReference type="InParanoid" id="Q9SUT0"/>
<dbReference type="OMA" id="NDEFALM"/>
<dbReference type="OrthoDB" id="10253408at2759"/>
<dbReference type="PhylomeDB" id="Q9SUT0"/>
<dbReference type="PRO" id="PR:Q9SUT0"/>
<dbReference type="Proteomes" id="UP000006548">
    <property type="component" value="Chromosome 4"/>
</dbReference>
<dbReference type="ExpressionAtlas" id="Q9SUT0">
    <property type="expression patterns" value="baseline and differential"/>
</dbReference>
<dbReference type="GO" id="GO:0008234">
    <property type="term" value="F:cysteine-type peptidase activity"/>
    <property type="evidence" value="ECO:0007669"/>
    <property type="project" value="UniProtKB-KW"/>
</dbReference>
<dbReference type="GO" id="GO:0006508">
    <property type="term" value="P:proteolysis"/>
    <property type="evidence" value="ECO:0007669"/>
    <property type="project" value="UniProtKB-KW"/>
</dbReference>
<dbReference type="CDD" id="cd02248">
    <property type="entry name" value="Peptidase_C1A"/>
    <property type="match status" value="1"/>
</dbReference>
<dbReference type="FunFam" id="3.90.70.10:FF:000067">
    <property type="entry name" value="Senescence-specific cysteine protease"/>
    <property type="match status" value="1"/>
</dbReference>
<dbReference type="Gene3D" id="3.90.70.10">
    <property type="entry name" value="Cysteine proteinases"/>
    <property type="match status" value="1"/>
</dbReference>
<dbReference type="InterPro" id="IPR038765">
    <property type="entry name" value="Papain-like_cys_pep_sf"/>
</dbReference>
<dbReference type="InterPro" id="IPR025660">
    <property type="entry name" value="Pept_his_AS"/>
</dbReference>
<dbReference type="InterPro" id="IPR013128">
    <property type="entry name" value="Peptidase_C1A"/>
</dbReference>
<dbReference type="InterPro" id="IPR000668">
    <property type="entry name" value="Peptidase_C1A_C"/>
</dbReference>
<dbReference type="InterPro" id="IPR039417">
    <property type="entry name" value="Peptidase_C1A_papain-like"/>
</dbReference>
<dbReference type="InterPro" id="IPR013201">
    <property type="entry name" value="Prot_inhib_I29"/>
</dbReference>
<dbReference type="PANTHER" id="PTHR12411">
    <property type="entry name" value="CYSTEINE PROTEASE FAMILY C1-RELATED"/>
    <property type="match status" value="1"/>
</dbReference>
<dbReference type="Pfam" id="PF08246">
    <property type="entry name" value="Inhibitor_I29"/>
    <property type="match status" value="1"/>
</dbReference>
<dbReference type="Pfam" id="PF00112">
    <property type="entry name" value="Peptidase_C1"/>
    <property type="match status" value="1"/>
</dbReference>
<dbReference type="PRINTS" id="PR00705">
    <property type="entry name" value="PAPAIN"/>
</dbReference>
<dbReference type="SMART" id="SM00848">
    <property type="entry name" value="Inhibitor_I29"/>
    <property type="match status" value="1"/>
</dbReference>
<dbReference type="SMART" id="SM00645">
    <property type="entry name" value="Pept_C1"/>
    <property type="match status" value="1"/>
</dbReference>
<dbReference type="SUPFAM" id="SSF54001">
    <property type="entry name" value="Cysteine proteinases"/>
    <property type="match status" value="1"/>
</dbReference>
<dbReference type="PROSITE" id="PS00639">
    <property type="entry name" value="THIOL_PROTEASE_HIS"/>
    <property type="match status" value="1"/>
</dbReference>
<comment type="function">
    <text evidence="2">Probable thiol protease.</text>
</comment>
<comment type="tissue specificity">
    <text evidence="10">Expressed in inflorescences.</text>
</comment>
<comment type="similarity">
    <text evidence="8">Belongs to the peptidase C1 family.</text>
</comment>
<comment type="sequence caution" evidence="12">
    <conflict type="erroneous initiation">
        <sequence resource="EMBL-CDS" id="AAM13065"/>
    </conflict>
    <text>Truncated N-terminus.</text>
</comment>
<comment type="sequence caution" evidence="12">
    <conflict type="erroneous initiation">
        <sequence resource="EMBL-CDS" id="AAN15418"/>
    </conflict>
    <text>Truncated N-terminus.</text>
</comment>
<reference key="1">
    <citation type="journal article" date="1999" name="Nature">
        <title>Sequence and analysis of chromosome 4 of the plant Arabidopsis thaliana.</title>
        <authorList>
            <person name="Mayer K.F.X."/>
            <person name="Schueller C."/>
            <person name="Wambutt R."/>
            <person name="Murphy G."/>
            <person name="Volckaert G."/>
            <person name="Pohl T."/>
            <person name="Duesterhoeft A."/>
            <person name="Stiekema W."/>
            <person name="Entian K.-D."/>
            <person name="Terryn N."/>
            <person name="Harris B."/>
            <person name="Ansorge W."/>
            <person name="Brandt P."/>
            <person name="Grivell L.A."/>
            <person name="Rieger M."/>
            <person name="Weichselgartner M."/>
            <person name="de Simone V."/>
            <person name="Obermaier B."/>
            <person name="Mache R."/>
            <person name="Mueller M."/>
            <person name="Kreis M."/>
            <person name="Delseny M."/>
            <person name="Puigdomenech P."/>
            <person name="Watson M."/>
            <person name="Schmidtheini T."/>
            <person name="Reichert B."/>
            <person name="Portetelle D."/>
            <person name="Perez-Alonso M."/>
            <person name="Boutry M."/>
            <person name="Bancroft I."/>
            <person name="Vos P."/>
            <person name="Hoheisel J."/>
            <person name="Zimmermann W."/>
            <person name="Wedler H."/>
            <person name="Ridley P."/>
            <person name="Langham S.-A."/>
            <person name="McCullagh B."/>
            <person name="Bilham L."/>
            <person name="Robben J."/>
            <person name="van der Schueren J."/>
            <person name="Grymonprez B."/>
            <person name="Chuang Y.-J."/>
            <person name="Vandenbussche F."/>
            <person name="Braeken M."/>
            <person name="Weltjens I."/>
            <person name="Voet M."/>
            <person name="Bastiaens I."/>
            <person name="Aert R."/>
            <person name="Defoor E."/>
            <person name="Weitzenegger T."/>
            <person name="Bothe G."/>
            <person name="Ramsperger U."/>
            <person name="Hilbert H."/>
            <person name="Braun M."/>
            <person name="Holzer E."/>
            <person name="Brandt A."/>
            <person name="Peters S."/>
            <person name="van Staveren M."/>
            <person name="Dirkse W."/>
            <person name="Mooijman P."/>
            <person name="Klein Lankhorst R."/>
            <person name="Rose M."/>
            <person name="Hauf J."/>
            <person name="Koetter P."/>
            <person name="Berneiser S."/>
            <person name="Hempel S."/>
            <person name="Feldpausch M."/>
            <person name="Lamberth S."/>
            <person name="Van den Daele H."/>
            <person name="De Keyser A."/>
            <person name="Buysshaert C."/>
            <person name="Gielen J."/>
            <person name="Villarroel R."/>
            <person name="De Clercq R."/>
            <person name="van Montagu M."/>
            <person name="Rogers J."/>
            <person name="Cronin A."/>
            <person name="Quail M.A."/>
            <person name="Bray-Allen S."/>
            <person name="Clark L."/>
            <person name="Doggett J."/>
            <person name="Hall S."/>
            <person name="Kay M."/>
            <person name="Lennard N."/>
            <person name="McLay K."/>
            <person name="Mayes R."/>
            <person name="Pettett A."/>
            <person name="Rajandream M.A."/>
            <person name="Lyne M."/>
            <person name="Benes V."/>
            <person name="Rechmann S."/>
            <person name="Borkova D."/>
            <person name="Bloecker H."/>
            <person name="Scharfe M."/>
            <person name="Grimm M."/>
            <person name="Loehnert T.-H."/>
            <person name="Dose S."/>
            <person name="de Haan M."/>
            <person name="Maarse A.C."/>
            <person name="Schaefer M."/>
            <person name="Mueller-Auer S."/>
            <person name="Gabel C."/>
            <person name="Fuchs M."/>
            <person name="Fartmann B."/>
            <person name="Granderath K."/>
            <person name="Dauner D."/>
            <person name="Herzl A."/>
            <person name="Neumann S."/>
            <person name="Argiriou A."/>
            <person name="Vitale D."/>
            <person name="Liguori R."/>
            <person name="Piravandi E."/>
            <person name="Massenet O."/>
            <person name="Quigley F."/>
            <person name="Clabauld G."/>
            <person name="Muendlein A."/>
            <person name="Felber R."/>
            <person name="Schnabl S."/>
            <person name="Hiller R."/>
            <person name="Schmidt W."/>
            <person name="Lecharny A."/>
            <person name="Aubourg S."/>
            <person name="Chefdor F."/>
            <person name="Cooke R."/>
            <person name="Berger C."/>
            <person name="Monfort A."/>
            <person name="Casacuberta E."/>
            <person name="Gibbons T."/>
            <person name="Weber N."/>
            <person name="Vandenbol M."/>
            <person name="Bargues M."/>
            <person name="Terol J."/>
            <person name="Torres A."/>
            <person name="Perez-Perez A."/>
            <person name="Purnelle B."/>
            <person name="Bent E."/>
            <person name="Johnson S."/>
            <person name="Tacon D."/>
            <person name="Jesse T."/>
            <person name="Heijnen L."/>
            <person name="Schwarz S."/>
            <person name="Scholler P."/>
            <person name="Heber S."/>
            <person name="Francs P."/>
            <person name="Bielke C."/>
            <person name="Frishman D."/>
            <person name="Haase D."/>
            <person name="Lemcke K."/>
            <person name="Mewes H.-W."/>
            <person name="Stocker S."/>
            <person name="Zaccaria P."/>
            <person name="Bevan M."/>
            <person name="Wilson R.K."/>
            <person name="de la Bastide M."/>
            <person name="Habermann K."/>
            <person name="Parnell L."/>
            <person name="Dedhia N."/>
            <person name="Gnoj L."/>
            <person name="Schutz K."/>
            <person name="Huang E."/>
            <person name="Spiegel L."/>
            <person name="Sekhon M."/>
            <person name="Murray J."/>
            <person name="Sheet P."/>
            <person name="Cordes M."/>
            <person name="Abu-Threideh J."/>
            <person name="Stoneking T."/>
            <person name="Kalicki J."/>
            <person name="Graves T."/>
            <person name="Harmon G."/>
            <person name="Edwards J."/>
            <person name="Latreille P."/>
            <person name="Courtney L."/>
            <person name="Cloud J."/>
            <person name="Abbott A."/>
            <person name="Scott K."/>
            <person name="Johnson D."/>
            <person name="Minx P."/>
            <person name="Bentley D."/>
            <person name="Fulton B."/>
            <person name="Miller N."/>
            <person name="Greco T."/>
            <person name="Kemp K."/>
            <person name="Kramer J."/>
            <person name="Fulton L."/>
            <person name="Mardis E."/>
            <person name="Dante M."/>
            <person name="Pepin K."/>
            <person name="Hillier L.W."/>
            <person name="Nelson J."/>
            <person name="Spieth J."/>
            <person name="Ryan E."/>
            <person name="Andrews S."/>
            <person name="Geisel C."/>
            <person name="Layman D."/>
            <person name="Du H."/>
            <person name="Ali J."/>
            <person name="Berghoff A."/>
            <person name="Jones K."/>
            <person name="Drone K."/>
            <person name="Cotton M."/>
            <person name="Joshu C."/>
            <person name="Antonoiu B."/>
            <person name="Zidanic M."/>
            <person name="Strong C."/>
            <person name="Sun H."/>
            <person name="Lamar B."/>
            <person name="Yordan C."/>
            <person name="Ma P."/>
            <person name="Zhong J."/>
            <person name="Preston R."/>
            <person name="Vil D."/>
            <person name="Shekher M."/>
            <person name="Matero A."/>
            <person name="Shah R."/>
            <person name="Swaby I.K."/>
            <person name="O'Shaughnessy A."/>
            <person name="Rodriguez M."/>
            <person name="Hoffman J."/>
            <person name="Till S."/>
            <person name="Granat S."/>
            <person name="Shohdy N."/>
            <person name="Hasegawa A."/>
            <person name="Hameed A."/>
            <person name="Lodhi M."/>
            <person name="Johnson A."/>
            <person name="Chen E."/>
            <person name="Marra M.A."/>
            <person name="Martienssen R."/>
            <person name="McCombie W.R."/>
        </authorList>
    </citation>
    <scope>NUCLEOTIDE SEQUENCE [LARGE SCALE GENOMIC DNA]</scope>
    <source>
        <strain>cv. Columbia</strain>
    </source>
</reference>
<reference key="2">
    <citation type="journal article" date="2017" name="Plant J.">
        <title>Araport11: a complete reannotation of the Arabidopsis thaliana reference genome.</title>
        <authorList>
            <person name="Cheng C.Y."/>
            <person name="Krishnakumar V."/>
            <person name="Chan A.P."/>
            <person name="Thibaud-Nissen F."/>
            <person name="Schobel S."/>
            <person name="Town C.D."/>
        </authorList>
    </citation>
    <scope>GENOME REANNOTATION</scope>
    <source>
        <strain>cv. Columbia</strain>
    </source>
</reference>
<reference key="3">
    <citation type="journal article" date="2003" name="Science">
        <title>Empirical analysis of transcriptional activity in the Arabidopsis genome.</title>
        <authorList>
            <person name="Yamada K."/>
            <person name="Lim J."/>
            <person name="Dale J.M."/>
            <person name="Chen H."/>
            <person name="Shinn P."/>
            <person name="Palm C.J."/>
            <person name="Southwick A.M."/>
            <person name="Wu H.C."/>
            <person name="Kim C.J."/>
            <person name="Nguyen M."/>
            <person name="Pham P.K."/>
            <person name="Cheuk R.F."/>
            <person name="Karlin-Newmann G."/>
            <person name="Liu S.X."/>
            <person name="Lam B."/>
            <person name="Sakano H."/>
            <person name="Wu T."/>
            <person name="Yu G."/>
            <person name="Miranda M."/>
            <person name="Quach H.L."/>
            <person name="Tripp M."/>
            <person name="Chang C.H."/>
            <person name="Lee J.M."/>
            <person name="Toriumi M.J."/>
            <person name="Chan M.M."/>
            <person name="Tang C.C."/>
            <person name="Onodera C.S."/>
            <person name="Deng J.M."/>
            <person name="Akiyama K."/>
            <person name="Ansari Y."/>
            <person name="Arakawa T."/>
            <person name="Banh J."/>
            <person name="Banno F."/>
            <person name="Bowser L."/>
            <person name="Brooks S.Y."/>
            <person name="Carninci P."/>
            <person name="Chao Q."/>
            <person name="Choy N."/>
            <person name="Enju A."/>
            <person name="Goldsmith A.D."/>
            <person name="Gurjal M."/>
            <person name="Hansen N.F."/>
            <person name="Hayashizaki Y."/>
            <person name="Johnson-Hopson C."/>
            <person name="Hsuan V.W."/>
            <person name="Iida K."/>
            <person name="Karnes M."/>
            <person name="Khan S."/>
            <person name="Koesema E."/>
            <person name="Ishida J."/>
            <person name="Jiang P.X."/>
            <person name="Jones T."/>
            <person name="Kawai J."/>
            <person name="Kamiya A."/>
            <person name="Meyers C."/>
            <person name="Nakajima M."/>
            <person name="Narusaka M."/>
            <person name="Seki M."/>
            <person name="Sakurai T."/>
            <person name="Satou M."/>
            <person name="Tamse R."/>
            <person name="Vaysberg M."/>
            <person name="Wallender E.K."/>
            <person name="Wong C."/>
            <person name="Yamamura Y."/>
            <person name="Yuan S."/>
            <person name="Shinozaki K."/>
            <person name="Davis R.W."/>
            <person name="Theologis A."/>
            <person name="Ecker J.R."/>
        </authorList>
    </citation>
    <scope>NUCLEOTIDE SEQUENCE [LARGE SCALE MRNA]</scope>
    <source>
        <strain>cv. Columbia</strain>
    </source>
</reference>
<reference key="4">
    <citation type="journal article" date="1996" name="Plant J.">
        <title>Further progress towards a catalogue of all Arabidopsis genes: analysis of a set of 5000 non-redundant ESTs.</title>
        <authorList>
            <person name="Cooke R."/>
            <person name="Raynal M."/>
            <person name="Laudie M."/>
            <person name="Grellet F."/>
            <person name="Delseny M."/>
            <person name="Morris P.-C."/>
            <person name="Guerrier D."/>
            <person name="Giraudat J."/>
            <person name="Quigley F."/>
            <person name="Clabault G."/>
            <person name="Li Y.-F."/>
            <person name="Mache R."/>
            <person name="Krivitzky M."/>
            <person name="Gy I.J.-J."/>
            <person name="Kreis M."/>
            <person name="Lecharny A."/>
            <person name="Parmentier Y."/>
            <person name="Marbach J."/>
            <person name="Fleck J."/>
            <person name="Clement B."/>
            <person name="Philipps G."/>
            <person name="Herve C."/>
            <person name="Bardet C."/>
            <person name="Tremousaygue D."/>
            <person name="Lescure B."/>
            <person name="Lacomme C."/>
            <person name="Roby D."/>
            <person name="Jourjon M.-F."/>
            <person name="Chabrier P."/>
            <person name="Charpenteau J.-L."/>
            <person name="Desprez T."/>
            <person name="Amselem J."/>
            <person name="Chiapello H."/>
            <person name="Hoefte H."/>
        </authorList>
    </citation>
    <scope>NUCLEOTIDE SEQUENCE [LARGE SCALE MRNA] OF 1-105</scope>
    <source>
        <strain>cv. Columbia</strain>
    </source>
</reference>
<reference key="5">
    <citation type="journal article" date="2013" name="Plant Mol. Biol.">
        <title>Cysteine protease enhances plant-mediated bollworm RNA interference.</title>
        <authorList>
            <person name="Mao Y.B."/>
            <person name="Xue X.Y."/>
            <person name="Tao X.Y."/>
            <person name="Yang C.Q."/>
            <person name="Wang L.J."/>
            <person name="Chen X.Y."/>
        </authorList>
    </citation>
    <scope>TISSUE SPECIFICITY</scope>
</reference>
<organism>
    <name type="scientific">Arabidopsis thaliana</name>
    <name type="common">Mouse-ear cress</name>
    <dbReference type="NCBI Taxonomy" id="3702"/>
    <lineage>
        <taxon>Eukaryota</taxon>
        <taxon>Viridiplantae</taxon>
        <taxon>Streptophyta</taxon>
        <taxon>Embryophyta</taxon>
        <taxon>Tracheophyta</taxon>
        <taxon>Spermatophyta</taxon>
        <taxon>Magnoliopsida</taxon>
        <taxon>eudicotyledons</taxon>
        <taxon>Gunneridae</taxon>
        <taxon>Pentapetalae</taxon>
        <taxon>rosids</taxon>
        <taxon>malvids</taxon>
        <taxon>Brassicales</taxon>
        <taxon>Brassicaceae</taxon>
        <taxon>Camelineae</taxon>
        <taxon>Arabidopsis</taxon>
    </lineage>
</organism>
<proteinExistence type="evidence at transcript level"/>